<feature type="chain" id="PRO_0000095895" description="Translation initiation factor IF-1">
    <location>
        <begin position="1"/>
        <end position="72"/>
    </location>
</feature>
<feature type="domain" description="S1-like" evidence="1">
    <location>
        <begin position="1"/>
        <end position="72"/>
    </location>
</feature>
<evidence type="ECO:0000255" key="1">
    <source>
        <dbReference type="HAMAP-Rule" id="MF_00075"/>
    </source>
</evidence>
<comment type="function">
    <text evidence="1">One of the essential components for the initiation of protein synthesis. Stabilizes the binding of IF-2 and IF-3 on the 30S subunit to which N-formylmethionyl-tRNA(fMet) subsequently binds. Helps modulate mRNA selection, yielding the 30S pre-initiation complex (PIC). Upon addition of the 50S ribosomal subunit IF-1, IF-2 and IF-3 are released leaving the mature 70S translation initiation complex.</text>
</comment>
<comment type="subunit">
    <text evidence="1">Component of the 30S ribosomal translation pre-initiation complex which assembles on the 30S ribosome in the order IF-2 and IF-3, IF-1 and N-formylmethionyl-tRNA(fMet); mRNA recruitment can occur at any time during PIC assembly.</text>
</comment>
<comment type="subcellular location">
    <subcellularLocation>
        <location evidence="1">Cytoplasm</location>
    </subcellularLocation>
</comment>
<comment type="similarity">
    <text evidence="1">Belongs to the IF-1 family.</text>
</comment>
<organism>
    <name type="scientific">Caldanaerobacter subterraneus subsp. tengcongensis (strain DSM 15242 / JCM 11007 / NBRC 100824 / MB4)</name>
    <name type="common">Thermoanaerobacter tengcongensis</name>
    <dbReference type="NCBI Taxonomy" id="273068"/>
    <lineage>
        <taxon>Bacteria</taxon>
        <taxon>Bacillati</taxon>
        <taxon>Bacillota</taxon>
        <taxon>Clostridia</taxon>
        <taxon>Thermoanaerobacterales</taxon>
        <taxon>Thermoanaerobacteraceae</taxon>
        <taxon>Caldanaerobacter</taxon>
    </lineage>
</organism>
<sequence length="72" mass="8143">MAKDDVIEVEGTVIEALPNAMFQVQLDNGHKVLAHVSGKLRMNFIRILPGDRVKVELSPYDLTRGRIVWRGK</sequence>
<reference key="1">
    <citation type="journal article" date="2002" name="Genome Res.">
        <title>A complete sequence of the T. tengcongensis genome.</title>
        <authorList>
            <person name="Bao Q."/>
            <person name="Tian Y."/>
            <person name="Li W."/>
            <person name="Xu Z."/>
            <person name="Xuan Z."/>
            <person name="Hu S."/>
            <person name="Dong W."/>
            <person name="Yang J."/>
            <person name="Chen Y."/>
            <person name="Xue Y."/>
            <person name="Xu Y."/>
            <person name="Lai X."/>
            <person name="Huang L."/>
            <person name="Dong X."/>
            <person name="Ma Y."/>
            <person name="Ling L."/>
            <person name="Tan H."/>
            <person name="Chen R."/>
            <person name="Wang J."/>
            <person name="Yu J."/>
            <person name="Yang H."/>
        </authorList>
    </citation>
    <scope>NUCLEOTIDE SEQUENCE [LARGE SCALE GENOMIC DNA]</scope>
    <source>
        <strain>DSM 15242 / JCM 11007 / NBRC 100824 / MB4</strain>
    </source>
</reference>
<keyword id="KW-0963">Cytoplasm</keyword>
<keyword id="KW-0396">Initiation factor</keyword>
<keyword id="KW-0648">Protein biosynthesis</keyword>
<keyword id="KW-1185">Reference proteome</keyword>
<keyword id="KW-0694">RNA-binding</keyword>
<keyword id="KW-0699">rRNA-binding</keyword>
<accession>Q8R7X7</accession>
<gene>
    <name evidence="1" type="primary">infA</name>
    <name type="ordered locus">TTE2268</name>
</gene>
<protein>
    <recommendedName>
        <fullName evidence="1">Translation initiation factor IF-1</fullName>
    </recommendedName>
</protein>
<name>IF1_CALS4</name>
<proteinExistence type="inferred from homology"/>
<dbReference type="EMBL" id="AE008691">
    <property type="protein sequence ID" value="AAM25412.1"/>
    <property type="molecule type" value="Genomic_DNA"/>
</dbReference>
<dbReference type="RefSeq" id="WP_011026315.1">
    <property type="nucleotide sequence ID" value="NZ_JANUCV010000001.1"/>
</dbReference>
<dbReference type="SMR" id="Q8R7X7"/>
<dbReference type="STRING" id="273068.TTE2268"/>
<dbReference type="KEGG" id="tte:TTE2268"/>
<dbReference type="eggNOG" id="COG0361">
    <property type="taxonomic scope" value="Bacteria"/>
</dbReference>
<dbReference type="HOGENOM" id="CLU_151267_1_0_9"/>
<dbReference type="OrthoDB" id="9803250at2"/>
<dbReference type="Proteomes" id="UP000000555">
    <property type="component" value="Chromosome"/>
</dbReference>
<dbReference type="GO" id="GO:0005829">
    <property type="term" value="C:cytosol"/>
    <property type="evidence" value="ECO:0007669"/>
    <property type="project" value="TreeGrafter"/>
</dbReference>
<dbReference type="GO" id="GO:0043022">
    <property type="term" value="F:ribosome binding"/>
    <property type="evidence" value="ECO:0007669"/>
    <property type="project" value="UniProtKB-UniRule"/>
</dbReference>
<dbReference type="GO" id="GO:0019843">
    <property type="term" value="F:rRNA binding"/>
    <property type="evidence" value="ECO:0007669"/>
    <property type="project" value="UniProtKB-UniRule"/>
</dbReference>
<dbReference type="GO" id="GO:0003743">
    <property type="term" value="F:translation initiation factor activity"/>
    <property type="evidence" value="ECO:0007669"/>
    <property type="project" value="UniProtKB-UniRule"/>
</dbReference>
<dbReference type="CDD" id="cd04451">
    <property type="entry name" value="S1_IF1"/>
    <property type="match status" value="1"/>
</dbReference>
<dbReference type="FunFam" id="2.40.50.140:FF:000002">
    <property type="entry name" value="Translation initiation factor IF-1"/>
    <property type="match status" value="1"/>
</dbReference>
<dbReference type="Gene3D" id="2.40.50.140">
    <property type="entry name" value="Nucleic acid-binding proteins"/>
    <property type="match status" value="1"/>
</dbReference>
<dbReference type="HAMAP" id="MF_00075">
    <property type="entry name" value="IF_1"/>
    <property type="match status" value="1"/>
</dbReference>
<dbReference type="InterPro" id="IPR012340">
    <property type="entry name" value="NA-bd_OB-fold"/>
</dbReference>
<dbReference type="InterPro" id="IPR006196">
    <property type="entry name" value="RNA-binding_domain_S1_IF1"/>
</dbReference>
<dbReference type="InterPro" id="IPR003029">
    <property type="entry name" value="S1_domain"/>
</dbReference>
<dbReference type="InterPro" id="IPR004368">
    <property type="entry name" value="TIF_IF1"/>
</dbReference>
<dbReference type="NCBIfam" id="TIGR00008">
    <property type="entry name" value="infA"/>
    <property type="match status" value="1"/>
</dbReference>
<dbReference type="PANTHER" id="PTHR33370">
    <property type="entry name" value="TRANSLATION INITIATION FACTOR IF-1, CHLOROPLASTIC"/>
    <property type="match status" value="1"/>
</dbReference>
<dbReference type="PANTHER" id="PTHR33370:SF1">
    <property type="entry name" value="TRANSLATION INITIATION FACTOR IF-1, CHLOROPLASTIC"/>
    <property type="match status" value="1"/>
</dbReference>
<dbReference type="Pfam" id="PF01176">
    <property type="entry name" value="eIF-1a"/>
    <property type="match status" value="1"/>
</dbReference>
<dbReference type="SMART" id="SM00316">
    <property type="entry name" value="S1"/>
    <property type="match status" value="1"/>
</dbReference>
<dbReference type="SUPFAM" id="SSF50249">
    <property type="entry name" value="Nucleic acid-binding proteins"/>
    <property type="match status" value="1"/>
</dbReference>
<dbReference type="PROSITE" id="PS50832">
    <property type="entry name" value="S1_IF1_TYPE"/>
    <property type="match status" value="1"/>
</dbReference>